<accession>Q9NZ50</accession>
<accession>Q1RMG7</accession>
<accession>Q9N187</accession>
<dbReference type="EMBL" id="AF219257">
    <property type="protein sequence ID" value="AAF32342.1"/>
    <property type="molecule type" value="mRNA"/>
</dbReference>
<dbReference type="EMBL" id="BC114910">
    <property type="protein sequence ID" value="AAI14911.1"/>
    <property type="molecule type" value="mRNA"/>
</dbReference>
<dbReference type="RefSeq" id="NP_776611.1">
    <property type="nucleotide sequence ID" value="NM_174186.2"/>
</dbReference>
<dbReference type="SMR" id="Q9NZ50"/>
<dbReference type="FunCoup" id="Q9NZ50">
    <property type="interactions" value="146"/>
</dbReference>
<dbReference type="STRING" id="9913.ENSBTAP00000071939"/>
<dbReference type="PaxDb" id="9913-ENSBTAP00000004571"/>
<dbReference type="Ensembl" id="ENSBTAT00000004571.6">
    <property type="protein sequence ID" value="ENSBTAP00000004571.4"/>
    <property type="gene ID" value="ENSBTAG00000003515.6"/>
</dbReference>
<dbReference type="GeneID" id="281494"/>
<dbReference type="KEGG" id="bta:281494"/>
<dbReference type="CTD" id="6623"/>
<dbReference type="VEuPathDB" id="HostDB:ENSBTAG00000003515"/>
<dbReference type="VGNC" id="VGNC:35062">
    <property type="gene designation" value="SNCG"/>
</dbReference>
<dbReference type="eggNOG" id="ENOG502S3WF">
    <property type="taxonomic scope" value="Eukaryota"/>
</dbReference>
<dbReference type="GeneTree" id="ENSGT00950000183175"/>
<dbReference type="HOGENOM" id="CLU_129378_0_0_1"/>
<dbReference type="InParanoid" id="Q9NZ50"/>
<dbReference type="OMA" id="TCERIEV"/>
<dbReference type="OrthoDB" id="9942391at2759"/>
<dbReference type="TreeFam" id="TF332776"/>
<dbReference type="Proteomes" id="UP000009136">
    <property type="component" value="Chromosome 28"/>
</dbReference>
<dbReference type="Bgee" id="ENSBTAG00000003515">
    <property type="expression patterns" value="Expressed in retina and 83 other cell types or tissues"/>
</dbReference>
<dbReference type="GO" id="GO:0043679">
    <property type="term" value="C:axon terminus"/>
    <property type="evidence" value="ECO:0000318"/>
    <property type="project" value="GO_Central"/>
</dbReference>
<dbReference type="GO" id="GO:0005813">
    <property type="term" value="C:centrosome"/>
    <property type="evidence" value="ECO:0007669"/>
    <property type="project" value="UniProtKB-SubCell"/>
</dbReference>
<dbReference type="GO" id="GO:0005737">
    <property type="term" value="C:cytoplasm"/>
    <property type="evidence" value="ECO:0000318"/>
    <property type="project" value="GO_Central"/>
</dbReference>
<dbReference type="GO" id="GO:0005829">
    <property type="term" value="C:cytosol"/>
    <property type="evidence" value="ECO:0007669"/>
    <property type="project" value="Ensembl"/>
</dbReference>
<dbReference type="GO" id="GO:0005794">
    <property type="term" value="C:Golgi apparatus"/>
    <property type="evidence" value="ECO:0007669"/>
    <property type="project" value="Ensembl"/>
</dbReference>
<dbReference type="GO" id="GO:0043025">
    <property type="term" value="C:neuronal cell body"/>
    <property type="evidence" value="ECO:0000318"/>
    <property type="project" value="GO_Central"/>
</dbReference>
<dbReference type="GO" id="GO:0048471">
    <property type="term" value="C:perinuclear region of cytoplasm"/>
    <property type="evidence" value="ECO:0007669"/>
    <property type="project" value="UniProtKB-SubCell"/>
</dbReference>
<dbReference type="GO" id="GO:0005819">
    <property type="term" value="C:spindle"/>
    <property type="evidence" value="ECO:0007669"/>
    <property type="project" value="UniProtKB-SubCell"/>
</dbReference>
<dbReference type="GO" id="GO:1903136">
    <property type="term" value="F:cuprous ion binding"/>
    <property type="evidence" value="ECO:0000318"/>
    <property type="project" value="GO_Central"/>
</dbReference>
<dbReference type="GO" id="GO:0008344">
    <property type="term" value="P:adult locomotory behavior"/>
    <property type="evidence" value="ECO:0007669"/>
    <property type="project" value="Ensembl"/>
</dbReference>
<dbReference type="GO" id="GO:0007268">
    <property type="term" value="P:chemical synaptic transmission"/>
    <property type="evidence" value="ECO:0000318"/>
    <property type="project" value="GO_Central"/>
</dbReference>
<dbReference type="GO" id="GO:0009306">
    <property type="term" value="P:protein secretion"/>
    <property type="evidence" value="ECO:0007669"/>
    <property type="project" value="Ensembl"/>
</dbReference>
<dbReference type="GO" id="GO:0014059">
    <property type="term" value="P:regulation of dopamine secretion"/>
    <property type="evidence" value="ECO:0007669"/>
    <property type="project" value="Ensembl"/>
</dbReference>
<dbReference type="GO" id="GO:0046928">
    <property type="term" value="P:regulation of neurotransmitter secretion"/>
    <property type="evidence" value="ECO:0007669"/>
    <property type="project" value="Ensembl"/>
</dbReference>
<dbReference type="GO" id="GO:0007165">
    <property type="term" value="P:signal transduction"/>
    <property type="evidence" value="ECO:0000304"/>
    <property type="project" value="ProtInc"/>
</dbReference>
<dbReference type="GO" id="GO:0050808">
    <property type="term" value="P:synapse organization"/>
    <property type="evidence" value="ECO:0000318"/>
    <property type="project" value="GO_Central"/>
</dbReference>
<dbReference type="GO" id="GO:0048488">
    <property type="term" value="P:synaptic vesicle endocytosis"/>
    <property type="evidence" value="ECO:0000318"/>
    <property type="project" value="GO_Central"/>
</dbReference>
<dbReference type="FunFam" id="1.10.287.700:FF:000002">
    <property type="entry name" value="Gamma-synuclein"/>
    <property type="match status" value="1"/>
</dbReference>
<dbReference type="Gene3D" id="1.10.287.700">
    <property type="entry name" value="Helix hairpin bin"/>
    <property type="match status" value="1"/>
</dbReference>
<dbReference type="InterPro" id="IPR001058">
    <property type="entry name" value="Synuclein"/>
</dbReference>
<dbReference type="InterPro" id="IPR002462">
    <property type="entry name" value="Synuclein_gamma"/>
</dbReference>
<dbReference type="PANTHER" id="PTHR13820:SF10">
    <property type="entry name" value="GAMMA-SYNUCLEIN"/>
    <property type="match status" value="1"/>
</dbReference>
<dbReference type="PANTHER" id="PTHR13820">
    <property type="entry name" value="SYNUCLEIN"/>
    <property type="match status" value="1"/>
</dbReference>
<dbReference type="Pfam" id="PF01387">
    <property type="entry name" value="Synuclein"/>
    <property type="match status" value="1"/>
</dbReference>
<dbReference type="PRINTS" id="PR01214">
    <property type="entry name" value="GSYNUCLEIN"/>
</dbReference>
<dbReference type="PRINTS" id="PR01211">
    <property type="entry name" value="SYNUCLEIN"/>
</dbReference>
<dbReference type="SUPFAM" id="SSF118375">
    <property type="entry name" value="Synuclein"/>
    <property type="match status" value="1"/>
</dbReference>
<protein>
    <recommendedName>
        <fullName>Gamma-synuclein</fullName>
    </recommendedName>
    <alternativeName>
        <fullName>Synoretin</fullName>
        <shortName>SR</shortName>
    </alternativeName>
</protein>
<evidence type="ECO:0000250" key="1"/>
<evidence type="ECO:0000250" key="2">
    <source>
        <dbReference type="UniProtKB" id="O76070"/>
    </source>
</evidence>
<evidence type="ECO:0000250" key="3">
    <source>
        <dbReference type="UniProtKB" id="Q63544"/>
    </source>
</evidence>
<evidence type="ECO:0000256" key="4">
    <source>
        <dbReference type="SAM" id="MobiDB-lite"/>
    </source>
</evidence>
<evidence type="ECO:0000269" key="5">
    <source>
    </source>
</evidence>
<evidence type="ECO:0000269" key="6">
    <source>
    </source>
</evidence>
<evidence type="ECO:0000305" key="7"/>
<evidence type="ECO:0000305" key="8">
    <source>
    </source>
</evidence>
<reference key="1">
    <citation type="journal article" date="1999" name="Mol. Cell. Neurosci.">
        <title>Synoretin: a new protein belonging to the synuclein family.</title>
        <authorList>
            <person name="Surguchov A."/>
            <person name="Surgucheva I."/>
            <person name="Solessio E."/>
            <person name="Baehr W."/>
        </authorList>
    </citation>
    <scope>NUCLEOTIDE SEQUENCE [MRNA]</scope>
    <source>
        <tissue>Retina</tissue>
    </source>
</reference>
<reference key="2">
    <citation type="submission" date="2006-04" db="EMBL/GenBank/DDBJ databases">
        <authorList>
            <consortium name="NIH - Mammalian Gene Collection (MGC) project"/>
        </authorList>
    </citation>
    <scope>NUCLEOTIDE SEQUENCE [LARGE SCALE MRNA]</scope>
    <source>
        <strain>Hereford</strain>
        <tissue>Fetal pons</tissue>
    </source>
</reference>
<reference key="3">
    <citation type="journal article" date="2000" name="J. Biol. Chem.">
        <title>Synucleins are a novel class of substrates for G protein-coupled receptor kinases.</title>
        <authorList>
            <person name="Pronin A.N."/>
            <person name="Morris A.J."/>
            <person name="Surguchov A."/>
            <person name="Benovic J.L."/>
        </authorList>
    </citation>
    <scope>PHOSPHORYLATION BY G-PROTEIN COUPLED RECEPTOR KINASES</scope>
</reference>
<reference key="4">
    <citation type="journal article" date="2001" name="Cell Motil. Cytoskeleton">
        <title>Gamma synuclein: subcellular localization in neuronal and non-neuronal cells and effect on signal transduction.</title>
        <authorList>
            <person name="Surguchov A."/>
            <person name="Palazzo R.E."/>
            <person name="Surgucheva I."/>
        </authorList>
    </citation>
    <scope>SUBCELLULAR LOCATION</scope>
</reference>
<gene>
    <name type="primary">SNCG</name>
</gene>
<keyword id="KW-0963">Cytoplasm</keyword>
<keyword id="KW-0206">Cytoskeleton</keyword>
<keyword id="KW-0597">Phosphoprotein</keyword>
<keyword id="KW-1185">Reference proteome</keyword>
<keyword id="KW-0677">Repeat</keyword>
<organism>
    <name type="scientific">Bos taurus</name>
    <name type="common">Bovine</name>
    <dbReference type="NCBI Taxonomy" id="9913"/>
    <lineage>
        <taxon>Eukaryota</taxon>
        <taxon>Metazoa</taxon>
        <taxon>Chordata</taxon>
        <taxon>Craniata</taxon>
        <taxon>Vertebrata</taxon>
        <taxon>Euteleostomi</taxon>
        <taxon>Mammalia</taxon>
        <taxon>Eutheria</taxon>
        <taxon>Laurasiatheria</taxon>
        <taxon>Artiodactyla</taxon>
        <taxon>Ruminantia</taxon>
        <taxon>Pecora</taxon>
        <taxon>Bovidae</taxon>
        <taxon>Bovinae</taxon>
        <taxon>Bos</taxon>
    </lineage>
</organism>
<sequence>MDVFKKGFSIAKEGVVGAVEKTKQGVTEAAEKTKEGVMYVGAKTKEGVVQSVTSVAEKTKEQANAVSEAVVSSVNTVATKTVEEVENIAVTSGVVHKEALKQPVPSQEDEAAKAEEQVAEETKSGGD</sequence>
<comment type="function">
    <text evidence="1">Plays a role in neurofilament network integrity. May be involved in modulating axonal architecture during development and in the adult. In vitro, increases the susceptibility of neurofilament-H to calcium-dependent proteases (By similarity). May also function in modulating the keratin network in skin. Activates the MAPK and Elk-1 signal transduction pathway.</text>
</comment>
<comment type="subunit">
    <text evidence="1">May be a centrosome-associated protein. Interacts with MYOC; affects its secretion and its aggregation (By similarity).</text>
</comment>
<comment type="subcellular location">
    <subcellularLocation>
        <location evidence="6">Cytoplasm</location>
        <location evidence="6">Perinuclear region</location>
    </subcellularLocation>
    <subcellularLocation>
        <location evidence="6">Cytoplasm</location>
        <location evidence="6">Cytoskeleton</location>
        <location evidence="6">Microtubule organizing center</location>
        <location evidence="6">Centrosome</location>
    </subcellularLocation>
    <subcellularLocation>
        <location evidence="6">Cytoplasm</location>
        <location evidence="6">Cytoskeleton</location>
        <location evidence="6">Spindle</location>
    </subcellularLocation>
    <text>Associated with centrosomes in several interphase cells. In mitotic cells, localized to the poles of the spindle.</text>
</comment>
<comment type="tissue specificity">
    <text>Predominantly expressed in retina (predominantly in outer nuclear layer, also in inner segment of photoreceptor cells, some individual cells located in the inner nuclear layer, inner plexiform layer and in nerve fiber layer). Also found in brain and heart.</text>
</comment>
<comment type="PTM">
    <text evidence="5">Phosphorylated by BARK1 and GRK5.</text>
</comment>
<comment type="similarity">
    <text evidence="7">Belongs to the synuclein family.</text>
</comment>
<comment type="caution">
    <text evidence="8">Was originally (PubMed:10192768) thought to correspond to a new class of synuclein. In fact, it is ortholog of the human gamma-synuclein.</text>
</comment>
<feature type="chain" id="PRO_0000184037" description="Gamma-synuclein">
    <location>
        <begin position="1"/>
        <end position="127"/>
    </location>
</feature>
<feature type="repeat" description="1">
    <location>
        <begin position="20"/>
        <end position="30"/>
    </location>
</feature>
<feature type="repeat" description="2">
    <location>
        <begin position="31"/>
        <end position="41"/>
    </location>
</feature>
<feature type="repeat" description="3; approximate">
    <location>
        <begin position="42"/>
        <end position="56"/>
    </location>
</feature>
<feature type="repeat" description="4">
    <location>
        <begin position="57"/>
        <end position="67"/>
    </location>
</feature>
<feature type="region of interest" description="4 X 11 AA tandem repeats of [EGSA]-K-T-K-[EQ]-[GQ]-V-X(4)">
    <location>
        <begin position="20"/>
        <end position="67"/>
    </location>
</feature>
<feature type="region of interest" description="Disordered" evidence="4">
    <location>
        <begin position="99"/>
        <end position="127"/>
    </location>
</feature>
<feature type="compositionally biased region" description="Basic and acidic residues" evidence="4">
    <location>
        <begin position="110"/>
        <end position="127"/>
    </location>
</feature>
<feature type="modified residue" description="Phosphoserine" evidence="3">
    <location>
        <position position="67"/>
    </location>
</feature>
<feature type="modified residue" description="Phosphoserine" evidence="3">
    <location>
        <position position="72"/>
    </location>
</feature>
<feature type="modified residue" description="Phosphoserine" evidence="2">
    <location>
        <position position="124"/>
    </location>
</feature>
<feature type="sequence conflict" description="In Ref. 2; AAI14911." evidence="7" ref="2">
    <original>A</original>
    <variation>V</variation>
    <location>
        <position position="11"/>
    </location>
</feature>
<proteinExistence type="evidence at protein level"/>
<name>SYUG_BOVIN</name>